<reference key="1">
    <citation type="journal article" date="2006" name="J. Bacteriol.">
        <title>Comparative genomic analysis of three strains of Ehrlichia ruminantium reveals an active process of genome size plasticity.</title>
        <authorList>
            <person name="Frutos R."/>
            <person name="Viari A."/>
            <person name="Ferraz C."/>
            <person name="Morgat A."/>
            <person name="Eychenie S."/>
            <person name="Kandassamy Y."/>
            <person name="Chantal I."/>
            <person name="Bensaid A."/>
            <person name="Coissac E."/>
            <person name="Vachiery N."/>
            <person name="Demaille J."/>
            <person name="Martinez D."/>
        </authorList>
    </citation>
    <scope>NUCLEOTIDE SEQUENCE [LARGE SCALE GENOMIC DNA]</scope>
    <source>
        <strain>Gardel</strain>
    </source>
</reference>
<protein>
    <recommendedName>
        <fullName evidence="1">Glycerol-3-phosphate dehydrogenase [NAD(P)+]</fullName>
        <ecNumber evidence="1">1.1.1.94</ecNumber>
    </recommendedName>
    <alternativeName>
        <fullName evidence="1">NAD(P)(+)-dependent glycerol-3-phosphate dehydrogenase</fullName>
    </alternativeName>
    <alternativeName>
        <fullName evidence="1">NAD(P)H-dependent dihydroxyacetone-phosphate reductase</fullName>
    </alternativeName>
</protein>
<evidence type="ECO:0000255" key="1">
    <source>
        <dbReference type="HAMAP-Rule" id="MF_00394"/>
    </source>
</evidence>
<organism>
    <name type="scientific">Ehrlichia ruminantium (strain Gardel)</name>
    <dbReference type="NCBI Taxonomy" id="302409"/>
    <lineage>
        <taxon>Bacteria</taxon>
        <taxon>Pseudomonadati</taxon>
        <taxon>Pseudomonadota</taxon>
        <taxon>Alphaproteobacteria</taxon>
        <taxon>Rickettsiales</taxon>
        <taxon>Anaplasmataceae</taxon>
        <taxon>Ehrlichia</taxon>
    </lineage>
</organism>
<accession>Q5FG15</accession>
<gene>
    <name evidence="1" type="primary">gpsA</name>
    <name type="ordered locus">ERGA_CDS_06830</name>
</gene>
<proteinExistence type="inferred from homology"/>
<name>GPDA_EHRRG</name>
<dbReference type="EC" id="1.1.1.94" evidence="1"/>
<dbReference type="EMBL" id="CR925677">
    <property type="protein sequence ID" value="CAI28135.1"/>
    <property type="molecule type" value="Genomic_DNA"/>
</dbReference>
<dbReference type="RefSeq" id="WP_011255770.1">
    <property type="nucleotide sequence ID" value="NC_006831.1"/>
</dbReference>
<dbReference type="SMR" id="Q5FG15"/>
<dbReference type="KEGG" id="erg:ERGA_CDS_06830"/>
<dbReference type="HOGENOM" id="CLU_033449_0_0_5"/>
<dbReference type="OrthoDB" id="9812273at2"/>
<dbReference type="UniPathway" id="UPA00940"/>
<dbReference type="Proteomes" id="UP000000533">
    <property type="component" value="Chromosome"/>
</dbReference>
<dbReference type="GO" id="GO:0005829">
    <property type="term" value="C:cytosol"/>
    <property type="evidence" value="ECO:0007669"/>
    <property type="project" value="TreeGrafter"/>
</dbReference>
<dbReference type="GO" id="GO:0047952">
    <property type="term" value="F:glycerol-3-phosphate dehydrogenase [NAD(P)+] activity"/>
    <property type="evidence" value="ECO:0007669"/>
    <property type="project" value="UniProtKB-UniRule"/>
</dbReference>
<dbReference type="GO" id="GO:0051287">
    <property type="term" value="F:NAD binding"/>
    <property type="evidence" value="ECO:0007669"/>
    <property type="project" value="InterPro"/>
</dbReference>
<dbReference type="GO" id="GO:0005975">
    <property type="term" value="P:carbohydrate metabolic process"/>
    <property type="evidence" value="ECO:0007669"/>
    <property type="project" value="InterPro"/>
</dbReference>
<dbReference type="GO" id="GO:0046167">
    <property type="term" value="P:glycerol-3-phosphate biosynthetic process"/>
    <property type="evidence" value="ECO:0007669"/>
    <property type="project" value="UniProtKB-UniRule"/>
</dbReference>
<dbReference type="GO" id="GO:0046168">
    <property type="term" value="P:glycerol-3-phosphate catabolic process"/>
    <property type="evidence" value="ECO:0007669"/>
    <property type="project" value="InterPro"/>
</dbReference>
<dbReference type="GO" id="GO:0006650">
    <property type="term" value="P:glycerophospholipid metabolic process"/>
    <property type="evidence" value="ECO:0007669"/>
    <property type="project" value="UniProtKB-UniRule"/>
</dbReference>
<dbReference type="GO" id="GO:0008654">
    <property type="term" value="P:phospholipid biosynthetic process"/>
    <property type="evidence" value="ECO:0007669"/>
    <property type="project" value="UniProtKB-KW"/>
</dbReference>
<dbReference type="FunFam" id="3.40.50.720:FF:000019">
    <property type="entry name" value="Glycerol-3-phosphate dehydrogenase [NAD(P)+]"/>
    <property type="match status" value="1"/>
</dbReference>
<dbReference type="Gene3D" id="1.10.1040.10">
    <property type="entry name" value="N-(1-d-carboxylethyl)-l-norvaline Dehydrogenase, domain 2"/>
    <property type="match status" value="1"/>
</dbReference>
<dbReference type="Gene3D" id="3.40.50.720">
    <property type="entry name" value="NAD(P)-binding Rossmann-like Domain"/>
    <property type="match status" value="1"/>
</dbReference>
<dbReference type="HAMAP" id="MF_00394">
    <property type="entry name" value="NAD_Glyc3P_dehydrog"/>
    <property type="match status" value="1"/>
</dbReference>
<dbReference type="InterPro" id="IPR008927">
    <property type="entry name" value="6-PGluconate_DH-like_C_sf"/>
</dbReference>
<dbReference type="InterPro" id="IPR013328">
    <property type="entry name" value="6PGD_dom2"/>
</dbReference>
<dbReference type="InterPro" id="IPR006168">
    <property type="entry name" value="G3P_DH_NAD-dep"/>
</dbReference>
<dbReference type="InterPro" id="IPR006109">
    <property type="entry name" value="G3P_DH_NAD-dep_C"/>
</dbReference>
<dbReference type="InterPro" id="IPR011128">
    <property type="entry name" value="G3P_DH_NAD-dep_N"/>
</dbReference>
<dbReference type="InterPro" id="IPR036291">
    <property type="entry name" value="NAD(P)-bd_dom_sf"/>
</dbReference>
<dbReference type="NCBIfam" id="NF000940">
    <property type="entry name" value="PRK00094.1-2"/>
    <property type="match status" value="1"/>
</dbReference>
<dbReference type="NCBIfam" id="NF000942">
    <property type="entry name" value="PRK00094.1-4"/>
    <property type="match status" value="1"/>
</dbReference>
<dbReference type="NCBIfam" id="NF011213">
    <property type="entry name" value="PRK14620.1"/>
    <property type="match status" value="1"/>
</dbReference>
<dbReference type="PANTHER" id="PTHR11728">
    <property type="entry name" value="GLYCEROL-3-PHOSPHATE DEHYDROGENASE"/>
    <property type="match status" value="1"/>
</dbReference>
<dbReference type="PANTHER" id="PTHR11728:SF1">
    <property type="entry name" value="GLYCEROL-3-PHOSPHATE DEHYDROGENASE [NAD(+)] 2, CHLOROPLASTIC"/>
    <property type="match status" value="1"/>
</dbReference>
<dbReference type="Pfam" id="PF07479">
    <property type="entry name" value="NAD_Gly3P_dh_C"/>
    <property type="match status" value="1"/>
</dbReference>
<dbReference type="Pfam" id="PF01210">
    <property type="entry name" value="NAD_Gly3P_dh_N"/>
    <property type="match status" value="1"/>
</dbReference>
<dbReference type="PIRSF" id="PIRSF000114">
    <property type="entry name" value="Glycerol-3-P_dh"/>
    <property type="match status" value="1"/>
</dbReference>
<dbReference type="PRINTS" id="PR00077">
    <property type="entry name" value="GPDHDRGNASE"/>
</dbReference>
<dbReference type="SUPFAM" id="SSF48179">
    <property type="entry name" value="6-phosphogluconate dehydrogenase C-terminal domain-like"/>
    <property type="match status" value="1"/>
</dbReference>
<dbReference type="SUPFAM" id="SSF51735">
    <property type="entry name" value="NAD(P)-binding Rossmann-fold domains"/>
    <property type="match status" value="1"/>
</dbReference>
<dbReference type="PROSITE" id="PS00957">
    <property type="entry name" value="NAD_G3PDH"/>
    <property type="match status" value="1"/>
</dbReference>
<keyword id="KW-0963">Cytoplasm</keyword>
<keyword id="KW-0444">Lipid biosynthesis</keyword>
<keyword id="KW-0443">Lipid metabolism</keyword>
<keyword id="KW-0520">NAD</keyword>
<keyword id="KW-0521">NADP</keyword>
<keyword id="KW-0547">Nucleotide-binding</keyword>
<keyword id="KW-0560">Oxidoreductase</keyword>
<keyword id="KW-0594">Phospholipid biosynthesis</keyword>
<keyword id="KW-1208">Phospholipid metabolism</keyword>
<sequence length="327" mass="35728">MKISILGAGSFGTAIAIALSAHGISVNLWGRDHRNITHINTYRKNLKYLPTYHLPDNIYATSNIDEVLSDNNTCIILTVPTQQLRTICTQIQHKQHMCKNTPMLICSKGIEITSLKFPSEIAEEILQYNPIFILSGPSFAKEIAEHLPCSIVLAGDNKELGESLIEKISNDVLKIIYHQDIIGVQIGAALKNIIAIACGIIAGKNLGNNAVATVITKGMNEIKTLYIAKNHSIDLHTLIGPSCLGDLILTCTTEHSRNMAFGLEIGKGRNINTLIDHNLKLVEGTSTVKPLISLAKKLNVELPICISIYNLLHENISLDKAISNILS</sequence>
<feature type="chain" id="PRO_0000255310" description="Glycerol-3-phosphate dehydrogenase [NAD(P)+]">
    <location>
        <begin position="1"/>
        <end position="327"/>
    </location>
</feature>
<feature type="active site" description="Proton acceptor" evidence="1">
    <location>
        <position position="191"/>
    </location>
</feature>
<feature type="binding site" evidence="1">
    <location>
        <position position="10"/>
    </location>
    <ligand>
        <name>NADPH</name>
        <dbReference type="ChEBI" id="CHEBI:57783"/>
    </ligand>
</feature>
<feature type="binding site" evidence="1">
    <location>
        <position position="11"/>
    </location>
    <ligand>
        <name>NADPH</name>
        <dbReference type="ChEBI" id="CHEBI:57783"/>
    </ligand>
</feature>
<feature type="binding site" evidence="1">
    <location>
        <position position="31"/>
    </location>
    <ligand>
        <name>NADPH</name>
        <dbReference type="ChEBI" id="CHEBI:57783"/>
    </ligand>
</feature>
<feature type="binding site" evidence="1">
    <location>
        <position position="108"/>
    </location>
    <ligand>
        <name>NADPH</name>
        <dbReference type="ChEBI" id="CHEBI:57783"/>
    </ligand>
</feature>
<feature type="binding site" evidence="1">
    <location>
        <position position="108"/>
    </location>
    <ligand>
        <name>sn-glycerol 3-phosphate</name>
        <dbReference type="ChEBI" id="CHEBI:57597"/>
    </ligand>
</feature>
<feature type="binding site" evidence="1">
    <location>
        <position position="136"/>
    </location>
    <ligand>
        <name>sn-glycerol 3-phosphate</name>
        <dbReference type="ChEBI" id="CHEBI:57597"/>
    </ligand>
</feature>
<feature type="binding site" evidence="1">
    <location>
        <position position="138"/>
    </location>
    <ligand>
        <name>sn-glycerol 3-phosphate</name>
        <dbReference type="ChEBI" id="CHEBI:57597"/>
    </ligand>
</feature>
<feature type="binding site" evidence="1">
    <location>
        <position position="140"/>
    </location>
    <ligand>
        <name>NADPH</name>
        <dbReference type="ChEBI" id="CHEBI:57783"/>
    </ligand>
</feature>
<feature type="binding site" evidence="1">
    <location>
        <position position="191"/>
    </location>
    <ligand>
        <name>sn-glycerol 3-phosphate</name>
        <dbReference type="ChEBI" id="CHEBI:57597"/>
    </ligand>
</feature>
<feature type="binding site" evidence="1">
    <location>
        <position position="246"/>
    </location>
    <ligand>
        <name>sn-glycerol 3-phosphate</name>
        <dbReference type="ChEBI" id="CHEBI:57597"/>
    </ligand>
</feature>
<feature type="binding site" evidence="1">
    <location>
        <position position="256"/>
    </location>
    <ligand>
        <name>sn-glycerol 3-phosphate</name>
        <dbReference type="ChEBI" id="CHEBI:57597"/>
    </ligand>
</feature>
<feature type="binding site" evidence="1">
    <location>
        <position position="257"/>
    </location>
    <ligand>
        <name>NADPH</name>
        <dbReference type="ChEBI" id="CHEBI:57783"/>
    </ligand>
</feature>
<feature type="binding site" evidence="1">
    <location>
        <position position="257"/>
    </location>
    <ligand>
        <name>sn-glycerol 3-phosphate</name>
        <dbReference type="ChEBI" id="CHEBI:57597"/>
    </ligand>
</feature>
<feature type="binding site" evidence="1">
    <location>
        <position position="258"/>
    </location>
    <ligand>
        <name>sn-glycerol 3-phosphate</name>
        <dbReference type="ChEBI" id="CHEBI:57597"/>
    </ligand>
</feature>
<feature type="binding site" evidence="1">
    <location>
        <position position="281"/>
    </location>
    <ligand>
        <name>NADPH</name>
        <dbReference type="ChEBI" id="CHEBI:57783"/>
    </ligand>
</feature>
<feature type="binding site" evidence="1">
    <location>
        <position position="283"/>
    </location>
    <ligand>
        <name>NADPH</name>
        <dbReference type="ChEBI" id="CHEBI:57783"/>
    </ligand>
</feature>
<comment type="function">
    <text evidence="1">Catalyzes the reduction of the glycolytic intermediate dihydroxyacetone phosphate (DHAP) to sn-glycerol 3-phosphate (G3P), the key precursor for phospholipid synthesis.</text>
</comment>
<comment type="catalytic activity">
    <reaction evidence="1">
        <text>sn-glycerol 3-phosphate + NAD(+) = dihydroxyacetone phosphate + NADH + H(+)</text>
        <dbReference type="Rhea" id="RHEA:11092"/>
        <dbReference type="ChEBI" id="CHEBI:15378"/>
        <dbReference type="ChEBI" id="CHEBI:57540"/>
        <dbReference type="ChEBI" id="CHEBI:57597"/>
        <dbReference type="ChEBI" id="CHEBI:57642"/>
        <dbReference type="ChEBI" id="CHEBI:57945"/>
        <dbReference type="EC" id="1.1.1.94"/>
    </reaction>
    <physiologicalReaction direction="right-to-left" evidence="1">
        <dbReference type="Rhea" id="RHEA:11094"/>
    </physiologicalReaction>
</comment>
<comment type="catalytic activity">
    <reaction evidence="1">
        <text>sn-glycerol 3-phosphate + NADP(+) = dihydroxyacetone phosphate + NADPH + H(+)</text>
        <dbReference type="Rhea" id="RHEA:11096"/>
        <dbReference type="ChEBI" id="CHEBI:15378"/>
        <dbReference type="ChEBI" id="CHEBI:57597"/>
        <dbReference type="ChEBI" id="CHEBI:57642"/>
        <dbReference type="ChEBI" id="CHEBI:57783"/>
        <dbReference type="ChEBI" id="CHEBI:58349"/>
        <dbReference type="EC" id="1.1.1.94"/>
    </reaction>
    <physiologicalReaction direction="right-to-left" evidence="1">
        <dbReference type="Rhea" id="RHEA:11098"/>
    </physiologicalReaction>
</comment>
<comment type="pathway">
    <text evidence="1">Membrane lipid metabolism; glycerophospholipid metabolism.</text>
</comment>
<comment type="subcellular location">
    <subcellularLocation>
        <location evidence="1">Cytoplasm</location>
    </subcellularLocation>
</comment>
<comment type="similarity">
    <text evidence="1">Belongs to the NAD-dependent glycerol-3-phosphate dehydrogenase family.</text>
</comment>